<reference key="1">
    <citation type="submission" date="2007-10" db="EMBL/GenBank/DDBJ databases">
        <title>Complete sequence of Desulfococcus oleovorans Hxd3.</title>
        <authorList>
            <consortium name="US DOE Joint Genome Institute"/>
            <person name="Copeland A."/>
            <person name="Lucas S."/>
            <person name="Lapidus A."/>
            <person name="Barry K."/>
            <person name="Glavina del Rio T."/>
            <person name="Dalin E."/>
            <person name="Tice H."/>
            <person name="Pitluck S."/>
            <person name="Kiss H."/>
            <person name="Brettin T."/>
            <person name="Bruce D."/>
            <person name="Detter J.C."/>
            <person name="Han C."/>
            <person name="Schmutz J."/>
            <person name="Larimer F."/>
            <person name="Land M."/>
            <person name="Hauser L."/>
            <person name="Kyrpides N."/>
            <person name="Kim E."/>
            <person name="Wawrik B."/>
            <person name="Richardson P."/>
        </authorList>
    </citation>
    <scope>NUCLEOTIDE SEQUENCE [LARGE SCALE GENOMIC DNA]</scope>
    <source>
        <strain>DSM 6200 / JCM 39069 / Hxd3</strain>
    </source>
</reference>
<comment type="similarity">
    <text evidence="1">Belongs to the universal ribosomal protein uL29 family.</text>
</comment>
<dbReference type="EMBL" id="CP000859">
    <property type="protein sequence ID" value="ABW66526.1"/>
    <property type="molecule type" value="Genomic_DNA"/>
</dbReference>
<dbReference type="RefSeq" id="WP_012174144.1">
    <property type="nucleotide sequence ID" value="NC_009943.1"/>
</dbReference>
<dbReference type="SMR" id="A8ZV65"/>
<dbReference type="STRING" id="96561.Dole_0716"/>
<dbReference type="KEGG" id="dol:Dole_0716"/>
<dbReference type="eggNOG" id="COG0255">
    <property type="taxonomic scope" value="Bacteria"/>
</dbReference>
<dbReference type="HOGENOM" id="CLU_158491_5_2_7"/>
<dbReference type="OrthoDB" id="9815192at2"/>
<dbReference type="Proteomes" id="UP000008561">
    <property type="component" value="Chromosome"/>
</dbReference>
<dbReference type="GO" id="GO:0022625">
    <property type="term" value="C:cytosolic large ribosomal subunit"/>
    <property type="evidence" value="ECO:0007669"/>
    <property type="project" value="TreeGrafter"/>
</dbReference>
<dbReference type="GO" id="GO:0003735">
    <property type="term" value="F:structural constituent of ribosome"/>
    <property type="evidence" value="ECO:0007669"/>
    <property type="project" value="InterPro"/>
</dbReference>
<dbReference type="GO" id="GO:0006412">
    <property type="term" value="P:translation"/>
    <property type="evidence" value="ECO:0007669"/>
    <property type="project" value="UniProtKB-UniRule"/>
</dbReference>
<dbReference type="CDD" id="cd00427">
    <property type="entry name" value="Ribosomal_L29_HIP"/>
    <property type="match status" value="1"/>
</dbReference>
<dbReference type="FunFam" id="1.10.287.310:FF:000001">
    <property type="entry name" value="50S ribosomal protein L29"/>
    <property type="match status" value="1"/>
</dbReference>
<dbReference type="Gene3D" id="1.10.287.310">
    <property type="match status" value="1"/>
</dbReference>
<dbReference type="HAMAP" id="MF_00374">
    <property type="entry name" value="Ribosomal_uL29"/>
    <property type="match status" value="1"/>
</dbReference>
<dbReference type="InterPro" id="IPR050063">
    <property type="entry name" value="Ribosomal_protein_uL29"/>
</dbReference>
<dbReference type="InterPro" id="IPR001854">
    <property type="entry name" value="Ribosomal_uL29"/>
</dbReference>
<dbReference type="InterPro" id="IPR036049">
    <property type="entry name" value="Ribosomal_uL29_sf"/>
</dbReference>
<dbReference type="NCBIfam" id="TIGR00012">
    <property type="entry name" value="L29"/>
    <property type="match status" value="1"/>
</dbReference>
<dbReference type="PANTHER" id="PTHR10916">
    <property type="entry name" value="60S RIBOSOMAL PROTEIN L35/50S RIBOSOMAL PROTEIN L29"/>
    <property type="match status" value="1"/>
</dbReference>
<dbReference type="PANTHER" id="PTHR10916:SF0">
    <property type="entry name" value="LARGE RIBOSOMAL SUBUNIT PROTEIN UL29C"/>
    <property type="match status" value="1"/>
</dbReference>
<dbReference type="Pfam" id="PF00831">
    <property type="entry name" value="Ribosomal_L29"/>
    <property type="match status" value="1"/>
</dbReference>
<dbReference type="SUPFAM" id="SSF46561">
    <property type="entry name" value="Ribosomal protein L29 (L29p)"/>
    <property type="match status" value="1"/>
</dbReference>
<proteinExistence type="inferred from homology"/>
<organism>
    <name type="scientific">Desulfosudis oleivorans (strain DSM 6200 / JCM 39069 / Hxd3)</name>
    <name type="common">Desulfococcus oleovorans</name>
    <dbReference type="NCBI Taxonomy" id="96561"/>
    <lineage>
        <taxon>Bacteria</taxon>
        <taxon>Pseudomonadati</taxon>
        <taxon>Thermodesulfobacteriota</taxon>
        <taxon>Desulfobacteria</taxon>
        <taxon>Desulfobacterales</taxon>
        <taxon>Desulfosudaceae</taxon>
        <taxon>Desulfosudis</taxon>
    </lineage>
</organism>
<evidence type="ECO:0000255" key="1">
    <source>
        <dbReference type="HAMAP-Rule" id="MF_00374"/>
    </source>
</evidence>
<evidence type="ECO:0000305" key="2"/>
<sequence>MKPDEIKALSADEAKQKLVELKAAYFNLRFRHETGQLDNTSMLEKTKKDIARVKTVLSAYNR</sequence>
<feature type="chain" id="PRO_1000121762" description="Large ribosomal subunit protein uL29">
    <location>
        <begin position="1"/>
        <end position="62"/>
    </location>
</feature>
<accession>A8ZV65</accession>
<gene>
    <name evidence="1" type="primary">rpmC</name>
    <name type="ordered locus">Dole_0716</name>
</gene>
<keyword id="KW-1185">Reference proteome</keyword>
<keyword id="KW-0687">Ribonucleoprotein</keyword>
<keyword id="KW-0689">Ribosomal protein</keyword>
<name>RL29_DESOH</name>
<protein>
    <recommendedName>
        <fullName evidence="1">Large ribosomal subunit protein uL29</fullName>
    </recommendedName>
    <alternativeName>
        <fullName evidence="2">50S ribosomal protein L29</fullName>
    </alternativeName>
</protein>